<dbReference type="EMBL" id="BC050816">
    <property type="protein sequence ID" value="AAH50816.1"/>
    <property type="molecule type" value="mRNA"/>
</dbReference>
<dbReference type="EMBL" id="AK009798">
    <property type="protein sequence ID" value="BAB26510.1"/>
    <property type="status" value="ALT_INIT"/>
    <property type="molecule type" value="mRNA"/>
</dbReference>
<dbReference type="EMBL" id="AK165593">
    <property type="protein sequence ID" value="BAE38281.1"/>
    <property type="status" value="ALT_INIT"/>
    <property type="molecule type" value="mRNA"/>
</dbReference>
<dbReference type="CCDS" id="CCDS21953.1"/>
<dbReference type="RefSeq" id="NP_081440.1">
    <property type="nucleotide sequence ID" value="NM_027164.1"/>
</dbReference>
<dbReference type="RefSeq" id="XP_006536325.1">
    <property type="nucleotide sequence ID" value="XM_006536262.4"/>
</dbReference>
<dbReference type="RefSeq" id="XP_006536327.1">
    <property type="nucleotide sequence ID" value="XM_006536264.3"/>
</dbReference>
<dbReference type="RefSeq" id="XP_006536328.1">
    <property type="nucleotide sequence ID" value="XM_006536265.4"/>
</dbReference>
<dbReference type="RefSeq" id="XP_011248164.1">
    <property type="nucleotide sequence ID" value="XM_011249862.3"/>
</dbReference>
<dbReference type="RefSeq" id="XP_011248165.1">
    <property type="nucleotide sequence ID" value="XM_011249863.3"/>
</dbReference>
<dbReference type="RefSeq" id="XP_011248166.1">
    <property type="nucleotide sequence ID" value="XM_011249864.2"/>
</dbReference>
<dbReference type="RefSeq" id="XP_011248167.1">
    <property type="nucleotide sequence ID" value="XM_011249865.2"/>
</dbReference>
<dbReference type="SMR" id="Q80YS5"/>
<dbReference type="FunCoup" id="Q80YS5">
    <property type="interactions" value="194"/>
</dbReference>
<dbReference type="STRING" id="10090.ENSMUSP00000016124"/>
<dbReference type="PhosphoSitePlus" id="Q80YS5"/>
<dbReference type="PaxDb" id="10090-ENSMUSP00000016124"/>
<dbReference type="ProteomicsDB" id="292025"/>
<dbReference type="Antibodypedia" id="48541">
    <property type="antibodies" value="9 antibodies from 7 providers"/>
</dbReference>
<dbReference type="DNASU" id="76612"/>
<dbReference type="Ensembl" id="ENSMUST00000016124.15">
    <property type="protein sequence ID" value="ENSMUSP00000016124.9"/>
    <property type="gene ID" value="ENSMUSG00000015980.15"/>
</dbReference>
<dbReference type="GeneID" id="76612"/>
<dbReference type="KEGG" id="mmu:76612"/>
<dbReference type="UCSC" id="uc009kfm.1">
    <property type="organism name" value="mouse"/>
</dbReference>
<dbReference type="AGR" id="MGI:1923862"/>
<dbReference type="CTD" id="80313"/>
<dbReference type="MGI" id="MGI:1923862">
    <property type="gene designation" value="Lrrc27"/>
</dbReference>
<dbReference type="VEuPathDB" id="HostDB:ENSMUSG00000015980"/>
<dbReference type="eggNOG" id="KOG0620">
    <property type="taxonomic scope" value="Eukaryota"/>
</dbReference>
<dbReference type="GeneTree" id="ENSGT00390000007203"/>
<dbReference type="HOGENOM" id="CLU_045069_0_0_1"/>
<dbReference type="InParanoid" id="Q80YS5"/>
<dbReference type="OMA" id="MIPKDFF"/>
<dbReference type="OrthoDB" id="2021138at2759"/>
<dbReference type="PhylomeDB" id="Q80YS5"/>
<dbReference type="TreeFam" id="TF351877"/>
<dbReference type="BioGRID-ORCS" id="76612">
    <property type="hits" value="0 hits in 77 CRISPR screens"/>
</dbReference>
<dbReference type="ChiTaRS" id="Lrrc27">
    <property type="organism name" value="mouse"/>
</dbReference>
<dbReference type="PRO" id="PR:Q80YS5"/>
<dbReference type="Proteomes" id="UP000000589">
    <property type="component" value="Chromosome 7"/>
</dbReference>
<dbReference type="RNAct" id="Q80YS5">
    <property type="molecule type" value="protein"/>
</dbReference>
<dbReference type="Bgee" id="ENSMUSG00000015980">
    <property type="expression patterns" value="Expressed in spermatid and 63 other cell types or tissues"/>
</dbReference>
<dbReference type="ExpressionAtlas" id="Q80YS5">
    <property type="expression patterns" value="baseline and differential"/>
</dbReference>
<dbReference type="Gene3D" id="3.80.10.10">
    <property type="entry name" value="Ribonuclease Inhibitor"/>
    <property type="match status" value="1"/>
</dbReference>
<dbReference type="InterPro" id="IPR001611">
    <property type="entry name" value="Leu-rich_rpt"/>
</dbReference>
<dbReference type="InterPro" id="IPR003591">
    <property type="entry name" value="Leu-rich_rpt_typical-subtyp"/>
</dbReference>
<dbReference type="InterPro" id="IPR032675">
    <property type="entry name" value="LRR_dom_sf"/>
</dbReference>
<dbReference type="InterPro" id="IPR050216">
    <property type="entry name" value="LRR_domain-containing"/>
</dbReference>
<dbReference type="PANTHER" id="PTHR48051">
    <property type="match status" value="1"/>
</dbReference>
<dbReference type="PANTHER" id="PTHR48051:SF35">
    <property type="entry name" value="LEUCINE-RICH REPEAT-CONTAINING PROTEIN 27"/>
    <property type="match status" value="1"/>
</dbReference>
<dbReference type="Pfam" id="PF13855">
    <property type="entry name" value="LRR_8"/>
    <property type="match status" value="1"/>
</dbReference>
<dbReference type="SMART" id="SM00369">
    <property type="entry name" value="LRR_TYP"/>
    <property type="match status" value="3"/>
</dbReference>
<dbReference type="SUPFAM" id="SSF52058">
    <property type="entry name" value="L domain-like"/>
    <property type="match status" value="1"/>
</dbReference>
<dbReference type="PROSITE" id="PS51450">
    <property type="entry name" value="LRR"/>
    <property type="match status" value="4"/>
</dbReference>
<sequence>MEDTSPQAVAEKAAKDPKAAKDLKDDAAAATKSFPDHFSREGDDQMDFEGVIFSSSPVLDLSQRGLRHLGKFFKIPNLQQLHLQRNLLREIPEDFFQLLPNLTWLDLRYNKIKVLPSGIGSHKHLKTLLLERNPIKMLPVELGQVTTLTALNLRHCPLEFPPRLIVQKGLVAILTFLRICSVEKAFPGDELLPEVSAPKMGSNDLQYPVLPLPRKGSPSENSLNDPDQEKEKADFFPPMERLDLSELRKSNAASEIWPSKEEIRRFWKLRQEIVENEQVEIQEKKLLAVELPPNLKAALNVKEKKHRKPWPAVRKRSTSFKGILPNLPSGYQNTVHANRMEDTHKAALQELQEKETVLEQRRRDKRALQEWREQTQHMRTRRELSKLQPPHSNMMASKIPFATDLTDYEKMPVSPFGKVKPSGEGTAQRPIEISASPLAELEDKIKRHTQQIRTRSFLGTNPMQDIKTANQDLETTKKLQEELRKLKVEMTLNKDHPFPSFTGNLSLHPPASQPQNIFFNTKS</sequence>
<gene>
    <name type="primary">Lrrc27</name>
</gene>
<protein>
    <recommendedName>
        <fullName>Leucine-rich repeat-containing protein 27</fullName>
    </recommendedName>
</protein>
<comment type="sequence caution" evidence="3">
    <conflict type="erroneous initiation">
        <sequence resource="EMBL-CDS" id="BAB26510"/>
    </conflict>
</comment>
<comment type="sequence caution" evidence="3">
    <conflict type="erroneous initiation">
        <sequence resource="EMBL-CDS" id="BAE38281"/>
    </conflict>
</comment>
<name>LRC27_MOUSE</name>
<feature type="chain" id="PRO_0000076243" description="Leucine-rich repeat-containing protein 27">
    <location>
        <begin position="1"/>
        <end position="523"/>
    </location>
</feature>
<feature type="repeat" description="LRR 1">
    <location>
        <begin position="55"/>
        <end position="76"/>
    </location>
</feature>
<feature type="repeat" description="LRR 2">
    <location>
        <begin position="77"/>
        <end position="98"/>
    </location>
</feature>
<feature type="repeat" description="LRR 3">
    <location>
        <begin position="101"/>
        <end position="122"/>
    </location>
</feature>
<feature type="repeat" description="LRR 4">
    <location>
        <begin position="124"/>
        <end position="145"/>
    </location>
</feature>
<feature type="repeat" description="LRR 5">
    <location>
        <begin position="147"/>
        <end position="168"/>
    </location>
</feature>
<feature type="region of interest" description="Disordered" evidence="2">
    <location>
        <begin position="1"/>
        <end position="26"/>
    </location>
</feature>
<feature type="region of interest" description="Disordered" evidence="2">
    <location>
        <begin position="206"/>
        <end position="236"/>
    </location>
</feature>
<feature type="region of interest" description="Disordered" evidence="2">
    <location>
        <begin position="372"/>
        <end position="394"/>
    </location>
</feature>
<feature type="region of interest" description="Disordered" evidence="2">
    <location>
        <begin position="503"/>
        <end position="523"/>
    </location>
</feature>
<feature type="coiled-coil region" evidence="1">
    <location>
        <begin position="335"/>
        <end position="374"/>
    </location>
</feature>
<feature type="coiled-coil region" evidence="1">
    <location>
        <begin position="463"/>
        <end position="494"/>
    </location>
</feature>
<feature type="compositionally biased region" description="Basic and acidic residues" evidence="2">
    <location>
        <begin position="12"/>
        <end position="26"/>
    </location>
</feature>
<feature type="compositionally biased region" description="Basic and acidic residues" evidence="2">
    <location>
        <begin position="227"/>
        <end position="236"/>
    </location>
</feature>
<feature type="compositionally biased region" description="Basic and acidic residues" evidence="2">
    <location>
        <begin position="372"/>
        <end position="385"/>
    </location>
</feature>
<feature type="compositionally biased region" description="Polar residues" evidence="2">
    <location>
        <begin position="513"/>
        <end position="523"/>
    </location>
</feature>
<keyword id="KW-0175">Coiled coil</keyword>
<keyword id="KW-0433">Leucine-rich repeat</keyword>
<keyword id="KW-1185">Reference proteome</keyword>
<keyword id="KW-0677">Repeat</keyword>
<accession>Q80YS5</accession>
<accession>Q9D6Z2</accession>
<evidence type="ECO:0000255" key="1"/>
<evidence type="ECO:0000256" key="2">
    <source>
        <dbReference type="SAM" id="MobiDB-lite"/>
    </source>
</evidence>
<evidence type="ECO:0000305" key="3"/>
<reference key="1">
    <citation type="journal article" date="2004" name="Genome Res.">
        <title>The status, quality, and expansion of the NIH full-length cDNA project: the Mammalian Gene Collection (MGC).</title>
        <authorList>
            <consortium name="The MGC Project Team"/>
        </authorList>
    </citation>
    <scope>NUCLEOTIDE SEQUENCE [LARGE SCALE MRNA]</scope>
    <source>
        <tissue>Testis</tissue>
    </source>
</reference>
<reference key="2">
    <citation type="journal article" date="2005" name="Science">
        <title>The transcriptional landscape of the mammalian genome.</title>
        <authorList>
            <person name="Carninci P."/>
            <person name="Kasukawa T."/>
            <person name="Katayama S."/>
            <person name="Gough J."/>
            <person name="Frith M.C."/>
            <person name="Maeda N."/>
            <person name="Oyama R."/>
            <person name="Ravasi T."/>
            <person name="Lenhard B."/>
            <person name="Wells C."/>
            <person name="Kodzius R."/>
            <person name="Shimokawa K."/>
            <person name="Bajic V.B."/>
            <person name="Brenner S.E."/>
            <person name="Batalov S."/>
            <person name="Forrest A.R."/>
            <person name="Zavolan M."/>
            <person name="Davis M.J."/>
            <person name="Wilming L.G."/>
            <person name="Aidinis V."/>
            <person name="Allen J.E."/>
            <person name="Ambesi-Impiombato A."/>
            <person name="Apweiler R."/>
            <person name="Aturaliya R.N."/>
            <person name="Bailey T.L."/>
            <person name="Bansal M."/>
            <person name="Baxter L."/>
            <person name="Beisel K.W."/>
            <person name="Bersano T."/>
            <person name="Bono H."/>
            <person name="Chalk A.M."/>
            <person name="Chiu K.P."/>
            <person name="Choudhary V."/>
            <person name="Christoffels A."/>
            <person name="Clutterbuck D.R."/>
            <person name="Crowe M.L."/>
            <person name="Dalla E."/>
            <person name="Dalrymple B.P."/>
            <person name="de Bono B."/>
            <person name="Della Gatta G."/>
            <person name="di Bernardo D."/>
            <person name="Down T."/>
            <person name="Engstrom P."/>
            <person name="Fagiolini M."/>
            <person name="Faulkner G."/>
            <person name="Fletcher C.F."/>
            <person name="Fukushima T."/>
            <person name="Furuno M."/>
            <person name="Futaki S."/>
            <person name="Gariboldi M."/>
            <person name="Georgii-Hemming P."/>
            <person name="Gingeras T.R."/>
            <person name="Gojobori T."/>
            <person name="Green R.E."/>
            <person name="Gustincich S."/>
            <person name="Harbers M."/>
            <person name="Hayashi Y."/>
            <person name="Hensch T.K."/>
            <person name="Hirokawa N."/>
            <person name="Hill D."/>
            <person name="Huminiecki L."/>
            <person name="Iacono M."/>
            <person name="Ikeo K."/>
            <person name="Iwama A."/>
            <person name="Ishikawa T."/>
            <person name="Jakt M."/>
            <person name="Kanapin A."/>
            <person name="Katoh M."/>
            <person name="Kawasawa Y."/>
            <person name="Kelso J."/>
            <person name="Kitamura H."/>
            <person name="Kitano H."/>
            <person name="Kollias G."/>
            <person name="Krishnan S.P."/>
            <person name="Kruger A."/>
            <person name="Kummerfeld S.K."/>
            <person name="Kurochkin I.V."/>
            <person name="Lareau L.F."/>
            <person name="Lazarevic D."/>
            <person name="Lipovich L."/>
            <person name="Liu J."/>
            <person name="Liuni S."/>
            <person name="McWilliam S."/>
            <person name="Madan Babu M."/>
            <person name="Madera M."/>
            <person name="Marchionni L."/>
            <person name="Matsuda H."/>
            <person name="Matsuzawa S."/>
            <person name="Miki H."/>
            <person name="Mignone F."/>
            <person name="Miyake S."/>
            <person name="Morris K."/>
            <person name="Mottagui-Tabar S."/>
            <person name="Mulder N."/>
            <person name="Nakano N."/>
            <person name="Nakauchi H."/>
            <person name="Ng P."/>
            <person name="Nilsson R."/>
            <person name="Nishiguchi S."/>
            <person name="Nishikawa S."/>
            <person name="Nori F."/>
            <person name="Ohara O."/>
            <person name="Okazaki Y."/>
            <person name="Orlando V."/>
            <person name="Pang K.C."/>
            <person name="Pavan W.J."/>
            <person name="Pavesi G."/>
            <person name="Pesole G."/>
            <person name="Petrovsky N."/>
            <person name="Piazza S."/>
            <person name="Reed J."/>
            <person name="Reid J.F."/>
            <person name="Ring B.Z."/>
            <person name="Ringwald M."/>
            <person name="Rost B."/>
            <person name="Ruan Y."/>
            <person name="Salzberg S.L."/>
            <person name="Sandelin A."/>
            <person name="Schneider C."/>
            <person name="Schoenbach C."/>
            <person name="Sekiguchi K."/>
            <person name="Semple C.A."/>
            <person name="Seno S."/>
            <person name="Sessa L."/>
            <person name="Sheng Y."/>
            <person name="Shibata Y."/>
            <person name="Shimada H."/>
            <person name="Shimada K."/>
            <person name="Silva D."/>
            <person name="Sinclair B."/>
            <person name="Sperling S."/>
            <person name="Stupka E."/>
            <person name="Sugiura K."/>
            <person name="Sultana R."/>
            <person name="Takenaka Y."/>
            <person name="Taki K."/>
            <person name="Tammoja K."/>
            <person name="Tan S.L."/>
            <person name="Tang S."/>
            <person name="Taylor M.S."/>
            <person name="Tegner J."/>
            <person name="Teichmann S.A."/>
            <person name="Ueda H.R."/>
            <person name="van Nimwegen E."/>
            <person name="Verardo R."/>
            <person name="Wei C.L."/>
            <person name="Yagi K."/>
            <person name="Yamanishi H."/>
            <person name="Zabarovsky E."/>
            <person name="Zhu S."/>
            <person name="Zimmer A."/>
            <person name="Hide W."/>
            <person name="Bult C."/>
            <person name="Grimmond S.M."/>
            <person name="Teasdale R.D."/>
            <person name="Liu E.T."/>
            <person name="Brusic V."/>
            <person name="Quackenbush J."/>
            <person name="Wahlestedt C."/>
            <person name="Mattick J.S."/>
            <person name="Hume D.A."/>
            <person name="Kai C."/>
            <person name="Sasaki D."/>
            <person name="Tomaru Y."/>
            <person name="Fukuda S."/>
            <person name="Kanamori-Katayama M."/>
            <person name="Suzuki M."/>
            <person name="Aoki J."/>
            <person name="Arakawa T."/>
            <person name="Iida J."/>
            <person name="Imamura K."/>
            <person name="Itoh M."/>
            <person name="Kato T."/>
            <person name="Kawaji H."/>
            <person name="Kawagashira N."/>
            <person name="Kawashima T."/>
            <person name="Kojima M."/>
            <person name="Kondo S."/>
            <person name="Konno H."/>
            <person name="Nakano K."/>
            <person name="Ninomiya N."/>
            <person name="Nishio T."/>
            <person name="Okada M."/>
            <person name="Plessy C."/>
            <person name="Shibata K."/>
            <person name="Shiraki T."/>
            <person name="Suzuki S."/>
            <person name="Tagami M."/>
            <person name="Waki K."/>
            <person name="Watahiki A."/>
            <person name="Okamura-Oho Y."/>
            <person name="Suzuki H."/>
            <person name="Kawai J."/>
            <person name="Hayashizaki Y."/>
        </authorList>
    </citation>
    <scope>NUCLEOTIDE SEQUENCE [LARGE SCALE MRNA] OF 395-523</scope>
    <source>
        <strain>C3H/HeJ</strain>
        <strain>C57BL/6J</strain>
        <tissue>Brain</tissue>
        <tissue>Tongue</tissue>
    </source>
</reference>
<organism>
    <name type="scientific">Mus musculus</name>
    <name type="common">Mouse</name>
    <dbReference type="NCBI Taxonomy" id="10090"/>
    <lineage>
        <taxon>Eukaryota</taxon>
        <taxon>Metazoa</taxon>
        <taxon>Chordata</taxon>
        <taxon>Craniata</taxon>
        <taxon>Vertebrata</taxon>
        <taxon>Euteleostomi</taxon>
        <taxon>Mammalia</taxon>
        <taxon>Eutheria</taxon>
        <taxon>Euarchontoglires</taxon>
        <taxon>Glires</taxon>
        <taxon>Rodentia</taxon>
        <taxon>Myomorpha</taxon>
        <taxon>Muroidea</taxon>
        <taxon>Muridae</taxon>
        <taxon>Murinae</taxon>
        <taxon>Mus</taxon>
        <taxon>Mus</taxon>
    </lineage>
</organism>
<proteinExistence type="evidence at transcript level"/>